<organism>
    <name type="scientific">Cerorhinca monocerata</name>
    <name type="common">Rhinoceros auklet</name>
    <name type="synonym">Alca monocerata</name>
    <dbReference type="NCBI Taxonomy" id="61263"/>
    <lineage>
        <taxon>Eukaryota</taxon>
        <taxon>Metazoa</taxon>
        <taxon>Chordata</taxon>
        <taxon>Craniata</taxon>
        <taxon>Vertebrata</taxon>
        <taxon>Euteleostomi</taxon>
        <taxon>Archelosauria</taxon>
        <taxon>Archosauria</taxon>
        <taxon>Dinosauria</taxon>
        <taxon>Saurischia</taxon>
        <taxon>Theropoda</taxon>
        <taxon>Coelurosauria</taxon>
        <taxon>Aves</taxon>
        <taxon>Neognathae</taxon>
        <taxon>Neoaves</taxon>
        <taxon>Charadriiformes</taxon>
        <taxon>Alcidae</taxon>
        <taxon>Cerorhinca</taxon>
    </lineage>
</organism>
<keyword id="KW-0963">Cytoplasm</keyword>
<keyword id="KW-0903">Direct protein sequencing</keyword>
<keyword id="KW-0349">Heme</keyword>
<keyword id="KW-0408">Iron</keyword>
<keyword id="KW-0479">Metal-binding</keyword>
<keyword id="KW-0514">Muscle protein</keyword>
<keyword id="KW-0560">Oxidoreductase</keyword>
<keyword id="KW-0561">Oxygen transport</keyword>
<keyword id="KW-0813">Transport</keyword>
<protein>
    <recommendedName>
        <fullName>Myoglobin</fullName>
    </recommendedName>
    <alternativeName>
        <fullName evidence="1">Nitrite reductase MB</fullName>
        <ecNumber evidence="1">1.7.-.-</ecNumber>
    </alternativeName>
    <alternativeName>
        <fullName evidence="1">Pseudoperoxidase MB</fullName>
        <ecNumber evidence="1">1.11.1.-</ecNumber>
    </alternativeName>
</protein>
<dbReference type="EC" id="1.7.-.-" evidence="1"/>
<dbReference type="EC" id="1.11.1.-" evidence="1"/>
<dbReference type="PIR" id="JC5190">
    <property type="entry name" value="JC5190"/>
</dbReference>
<dbReference type="SMR" id="Q7LZM4"/>
<dbReference type="GO" id="GO:0070062">
    <property type="term" value="C:extracellular exosome"/>
    <property type="evidence" value="ECO:0007669"/>
    <property type="project" value="TreeGrafter"/>
</dbReference>
<dbReference type="GO" id="GO:0016528">
    <property type="term" value="C:sarcoplasm"/>
    <property type="evidence" value="ECO:0000250"/>
    <property type="project" value="UniProtKB"/>
</dbReference>
<dbReference type="GO" id="GO:0020037">
    <property type="term" value="F:heme binding"/>
    <property type="evidence" value="ECO:0007669"/>
    <property type="project" value="InterPro"/>
</dbReference>
<dbReference type="GO" id="GO:0046872">
    <property type="term" value="F:metal ion binding"/>
    <property type="evidence" value="ECO:0007669"/>
    <property type="project" value="UniProtKB-KW"/>
</dbReference>
<dbReference type="GO" id="GO:0098809">
    <property type="term" value="F:nitrite reductase activity"/>
    <property type="evidence" value="ECO:0000250"/>
    <property type="project" value="UniProtKB"/>
</dbReference>
<dbReference type="GO" id="GO:0019825">
    <property type="term" value="F:oxygen binding"/>
    <property type="evidence" value="ECO:0007669"/>
    <property type="project" value="InterPro"/>
</dbReference>
<dbReference type="GO" id="GO:0005344">
    <property type="term" value="F:oxygen carrier activity"/>
    <property type="evidence" value="ECO:0000250"/>
    <property type="project" value="UniProtKB"/>
</dbReference>
<dbReference type="GO" id="GO:0004601">
    <property type="term" value="F:peroxidase activity"/>
    <property type="evidence" value="ECO:0000250"/>
    <property type="project" value="UniProtKB"/>
</dbReference>
<dbReference type="GO" id="GO:0019430">
    <property type="term" value="P:removal of superoxide radicals"/>
    <property type="evidence" value="ECO:0000250"/>
    <property type="project" value="UniProtKB"/>
</dbReference>
<dbReference type="Gene3D" id="6.10.140.2100">
    <property type="match status" value="1"/>
</dbReference>
<dbReference type="Gene3D" id="6.10.140.2110">
    <property type="match status" value="1"/>
</dbReference>
<dbReference type="InterPro" id="IPR000971">
    <property type="entry name" value="Globin"/>
</dbReference>
<dbReference type="InterPro" id="IPR009050">
    <property type="entry name" value="Globin-like_sf"/>
</dbReference>
<dbReference type="InterPro" id="IPR002335">
    <property type="entry name" value="Myoglobin"/>
</dbReference>
<dbReference type="PANTHER" id="PTHR47132">
    <property type="entry name" value="MYOGLOBIN"/>
    <property type="match status" value="1"/>
</dbReference>
<dbReference type="PANTHER" id="PTHR47132:SF1">
    <property type="entry name" value="MYOGLOBIN"/>
    <property type="match status" value="1"/>
</dbReference>
<dbReference type="Pfam" id="PF00042">
    <property type="entry name" value="Globin"/>
    <property type="match status" value="1"/>
</dbReference>
<dbReference type="PRINTS" id="PR00613">
    <property type="entry name" value="MYOGLOBIN"/>
</dbReference>
<dbReference type="SUPFAM" id="SSF46458">
    <property type="entry name" value="Globin-like"/>
    <property type="match status" value="1"/>
</dbReference>
<dbReference type="PROSITE" id="PS01033">
    <property type="entry name" value="GLOBIN"/>
    <property type="match status" value="1"/>
</dbReference>
<comment type="function">
    <text evidence="1">Monomeric heme protein which primary function is to store oxygen and facilitate its diffusion within muscle tissues. Reversibly binds oxygen through a pentacoordinated heme iron and enables its timely and efficient release as needed during periods of heightened demand. Depending on the oxidative conditions of tissues and cells, and in addition to its ability to bind oxygen, it also has a nitrite reductase activity whereby it regulates the production of bioactive nitric oxide. Under stress conditions, like hypoxia and anoxia, it also protects cells against reactive oxygen species thanks to its pseudoperoxidase activity.</text>
</comment>
<comment type="catalytic activity">
    <reaction evidence="1">
        <text>Fe(III)-heme b-[protein] + nitric oxide + H2O = Fe(II)-heme b-[protein] + nitrite + 2 H(+)</text>
        <dbReference type="Rhea" id="RHEA:77711"/>
        <dbReference type="Rhea" id="RHEA-COMP:18975"/>
        <dbReference type="Rhea" id="RHEA-COMP:18976"/>
        <dbReference type="ChEBI" id="CHEBI:15377"/>
        <dbReference type="ChEBI" id="CHEBI:15378"/>
        <dbReference type="ChEBI" id="CHEBI:16301"/>
        <dbReference type="ChEBI" id="CHEBI:16480"/>
        <dbReference type="ChEBI" id="CHEBI:55376"/>
        <dbReference type="ChEBI" id="CHEBI:60344"/>
    </reaction>
    <physiologicalReaction direction="right-to-left" evidence="1">
        <dbReference type="Rhea" id="RHEA:77713"/>
    </physiologicalReaction>
</comment>
<comment type="catalytic activity">
    <reaction evidence="1">
        <text>H2O2 + AH2 = A + 2 H2O</text>
        <dbReference type="Rhea" id="RHEA:30275"/>
        <dbReference type="ChEBI" id="CHEBI:13193"/>
        <dbReference type="ChEBI" id="CHEBI:15377"/>
        <dbReference type="ChEBI" id="CHEBI:16240"/>
        <dbReference type="ChEBI" id="CHEBI:17499"/>
    </reaction>
</comment>
<comment type="subunit">
    <text evidence="2">Monomeric.</text>
</comment>
<comment type="subcellular location">
    <subcellularLocation>
        <location evidence="1">Cytoplasm</location>
        <location evidence="1">Sarcoplasm</location>
    </subcellularLocation>
</comment>
<comment type="similarity">
    <text evidence="5">Belongs to the globin family.</text>
</comment>
<evidence type="ECO:0000250" key="1">
    <source>
        <dbReference type="UniProtKB" id="P02144"/>
    </source>
</evidence>
<evidence type="ECO:0000250" key="2">
    <source>
        <dbReference type="UniProtKB" id="P02185"/>
    </source>
</evidence>
<evidence type="ECO:0000250" key="3">
    <source>
        <dbReference type="UniProtKB" id="P02189"/>
    </source>
</evidence>
<evidence type="ECO:0000250" key="4">
    <source>
        <dbReference type="UniProtKB" id="P68082"/>
    </source>
</evidence>
<evidence type="ECO:0000255" key="5">
    <source>
        <dbReference type="PROSITE-ProRule" id="PRU00238"/>
    </source>
</evidence>
<evidence type="ECO:0000269" key="6">
    <source ref="1"/>
</evidence>
<accession>Q7LZM4</accession>
<feature type="initiator methionine" description="Removed" evidence="6">
    <location>
        <position position="1"/>
    </location>
</feature>
<feature type="chain" id="PRO_0000053355" description="Myoglobin">
    <location>
        <begin position="2"/>
        <end position="154"/>
    </location>
</feature>
<feature type="domain" description="Globin" evidence="5">
    <location>
        <begin position="2"/>
        <end position="148"/>
    </location>
</feature>
<feature type="binding site" evidence="4">
    <location>
        <position position="65"/>
    </location>
    <ligand>
        <name>nitrite</name>
        <dbReference type="ChEBI" id="CHEBI:16301"/>
    </ligand>
</feature>
<feature type="binding site" evidence="3 5">
    <location>
        <position position="65"/>
    </location>
    <ligand>
        <name>O2</name>
        <dbReference type="ChEBI" id="CHEBI:15379"/>
    </ligand>
</feature>
<feature type="binding site" description="proximal binding residue" evidence="1">
    <location>
        <position position="94"/>
    </location>
    <ligand>
        <name>heme b</name>
        <dbReference type="ChEBI" id="CHEBI:60344"/>
    </ligand>
    <ligandPart>
        <name>Fe</name>
        <dbReference type="ChEBI" id="CHEBI:18248"/>
    </ligandPart>
</feature>
<proteinExistence type="evidence at protein level"/>
<gene>
    <name type="primary">MB</name>
</gene>
<name>MYG_CERMN</name>
<sequence>MGLSDQEWQQVLSIWGKVESDLAGHGHQVLMRLFQDHPETLDRFEKFKGLKTPDQMKGSEDLKKHGVTVLTQLGKILKQKGNHESELKPLAQTHATKHKIPVKYLEFISEAIMKVIAEKHAADFGGDSQAAMKKALELFRNDMASKYKEFGFQG</sequence>
<reference key="1">
    <citation type="journal article" date="1997" name="Res. Commun. Biochem. Cell Mol. Biol.">
        <title>Primary structure of myoglobin from rhinoceros auklet.</title>
        <authorList>
            <person name="Miyazaki K."/>
            <person name="Otsuka J."/>
            <person name="Satake K."/>
            <person name="Tsugita A."/>
        </authorList>
    </citation>
    <scope>PROTEIN SEQUENCE OF 2-154</scope>
</reference>